<proteinExistence type="inferred from homology"/>
<evidence type="ECO:0000255" key="1">
    <source>
        <dbReference type="HAMAP-Rule" id="MF_00473"/>
    </source>
</evidence>
<evidence type="ECO:0000305" key="2"/>
<sequence>MAFYRTPHDVTALPAWKALQQHREAMRGFSMSEAFAADAKRFDQFSLSACGLFLDYSKNLITEQSRDLLVNLANEVGLQDAIKSMFSGEIINASEGRPVLHTALRRPVGDKLSVNGVNVMPEVHKVLNQITELVGRIHDGLWRGYSEKPITDVVNIGIGGSFLGPELVSEALLPYAQRGVRCHYLANIDGSEFHELSANLRAETTLFIVSSKSFNTLETLKNAMAARTWYLAQGGSEAELYRHFIAVSSNKAAAVAFGIREENIFPMWDWVGGRYSLWSAIGLPIALAIGTANFKELLSGAYTMDQHFQTAPFDKNMPVLLALLGVWYGNFWDANSHAILPYDHYLRNITKHLQQLDMESNGKSVLQDGTPVKTDTGPVIWGGVGCNGQHAYHQLLHQGTQLIPADFIVPVVSFNPVADHHQWLYANCLSQSQALMLGKTREEAEAELRAKGLNEADIEKLAPHKVIPGNRPSNTLVVERISPRRLGALVAMYEHKVFVQSVIWGINAFDQWGVELGKELGKSVYQRLVGSLEDSAEDGSTQGLINYFRGKHRG</sequence>
<reference key="1">
    <citation type="journal article" date="2002" name="Environ. Microbiol.">
        <title>Complete genome sequence and comparative analysis of the metabolically versatile Pseudomonas putida KT2440.</title>
        <authorList>
            <person name="Nelson K.E."/>
            <person name="Weinel C."/>
            <person name="Paulsen I.T."/>
            <person name="Dodson R.J."/>
            <person name="Hilbert H."/>
            <person name="Martins dos Santos V.A.P."/>
            <person name="Fouts D.E."/>
            <person name="Gill S.R."/>
            <person name="Pop M."/>
            <person name="Holmes M."/>
            <person name="Brinkac L.M."/>
            <person name="Beanan M.J."/>
            <person name="DeBoy R.T."/>
            <person name="Daugherty S.C."/>
            <person name="Kolonay J.F."/>
            <person name="Madupu R."/>
            <person name="Nelson W.C."/>
            <person name="White O."/>
            <person name="Peterson J.D."/>
            <person name="Khouri H.M."/>
            <person name="Hance I."/>
            <person name="Chris Lee P."/>
            <person name="Holtzapple E.K."/>
            <person name="Scanlan D."/>
            <person name="Tran K."/>
            <person name="Moazzez A."/>
            <person name="Utterback T.R."/>
            <person name="Rizzo M."/>
            <person name="Lee K."/>
            <person name="Kosack D."/>
            <person name="Moestl D."/>
            <person name="Wedler H."/>
            <person name="Lauber J."/>
            <person name="Stjepandic D."/>
            <person name="Hoheisel J."/>
            <person name="Straetz M."/>
            <person name="Heim S."/>
            <person name="Kiewitz C."/>
            <person name="Eisen J.A."/>
            <person name="Timmis K.N."/>
            <person name="Duesterhoeft A."/>
            <person name="Tuemmler B."/>
            <person name="Fraser C.M."/>
        </authorList>
    </citation>
    <scope>NUCLEOTIDE SEQUENCE [LARGE SCALE GENOMIC DNA]</scope>
    <source>
        <strain>ATCC 47054 / DSM 6125 / CFBP 8728 / NCIMB 11950 / KT2440</strain>
    </source>
</reference>
<feature type="chain" id="PRO_0000180711" description="Glucose-6-phosphate isomerase 1">
    <location>
        <begin position="1"/>
        <end position="554"/>
    </location>
</feature>
<feature type="active site" description="Proton donor" evidence="1">
    <location>
        <position position="359"/>
    </location>
</feature>
<feature type="active site" evidence="1">
    <location>
        <position position="390"/>
    </location>
</feature>
<feature type="active site" evidence="1">
    <location>
        <position position="518"/>
    </location>
</feature>
<accession>Q88LW9</accession>
<gene>
    <name evidence="1" type="primary">pgi1</name>
    <name type="synonym">pgi-1</name>
    <name type="ordered locus">PP_1808</name>
</gene>
<protein>
    <recommendedName>
        <fullName evidence="1">Glucose-6-phosphate isomerase 1</fullName>
        <shortName evidence="1">GPI 1</shortName>
        <ecNumber evidence="1">5.3.1.9</ecNumber>
    </recommendedName>
    <alternativeName>
        <fullName evidence="1">Phosphoglucose isomerase 1</fullName>
        <shortName evidence="1">PGI 1</shortName>
    </alternativeName>
    <alternativeName>
        <fullName evidence="1">Phosphohexose isomerase 1</fullName>
        <shortName evidence="1">PHI 1</shortName>
    </alternativeName>
</protein>
<organism>
    <name type="scientific">Pseudomonas putida (strain ATCC 47054 / DSM 6125 / CFBP 8728 / NCIMB 11950 / KT2440)</name>
    <dbReference type="NCBI Taxonomy" id="160488"/>
    <lineage>
        <taxon>Bacteria</taxon>
        <taxon>Pseudomonadati</taxon>
        <taxon>Pseudomonadota</taxon>
        <taxon>Gammaproteobacteria</taxon>
        <taxon>Pseudomonadales</taxon>
        <taxon>Pseudomonadaceae</taxon>
        <taxon>Pseudomonas</taxon>
    </lineage>
</organism>
<keyword id="KW-0963">Cytoplasm</keyword>
<keyword id="KW-0312">Gluconeogenesis</keyword>
<keyword id="KW-0324">Glycolysis</keyword>
<keyword id="KW-0413">Isomerase</keyword>
<keyword id="KW-1185">Reference proteome</keyword>
<name>G6PI1_PSEPK</name>
<dbReference type="EC" id="5.3.1.9" evidence="1"/>
<dbReference type="EMBL" id="AE015451">
    <property type="protein sequence ID" value="AAN67427.1"/>
    <property type="molecule type" value="Genomic_DNA"/>
</dbReference>
<dbReference type="RefSeq" id="NP_743963.1">
    <property type="nucleotide sequence ID" value="NC_002947.4"/>
</dbReference>
<dbReference type="SMR" id="Q88LW9"/>
<dbReference type="STRING" id="160488.PP_1808"/>
<dbReference type="PaxDb" id="160488-PP_1808"/>
<dbReference type="KEGG" id="ppu:PP_1808"/>
<dbReference type="PATRIC" id="fig|160488.4.peg.1907"/>
<dbReference type="eggNOG" id="COG0166">
    <property type="taxonomic scope" value="Bacteria"/>
</dbReference>
<dbReference type="HOGENOM" id="CLU_017947_3_1_6"/>
<dbReference type="OrthoDB" id="140919at2"/>
<dbReference type="PhylomeDB" id="Q88LW9"/>
<dbReference type="BioCyc" id="PPUT160488:G1G01-1911-MONOMER"/>
<dbReference type="UniPathway" id="UPA00109">
    <property type="reaction ID" value="UER00181"/>
</dbReference>
<dbReference type="UniPathway" id="UPA00138"/>
<dbReference type="Proteomes" id="UP000000556">
    <property type="component" value="Chromosome"/>
</dbReference>
<dbReference type="GO" id="GO:0005829">
    <property type="term" value="C:cytosol"/>
    <property type="evidence" value="ECO:0007669"/>
    <property type="project" value="TreeGrafter"/>
</dbReference>
<dbReference type="GO" id="GO:0097367">
    <property type="term" value="F:carbohydrate derivative binding"/>
    <property type="evidence" value="ECO:0007669"/>
    <property type="project" value="InterPro"/>
</dbReference>
<dbReference type="GO" id="GO:0004347">
    <property type="term" value="F:glucose-6-phosphate isomerase activity"/>
    <property type="evidence" value="ECO:0007669"/>
    <property type="project" value="UniProtKB-UniRule"/>
</dbReference>
<dbReference type="GO" id="GO:0048029">
    <property type="term" value="F:monosaccharide binding"/>
    <property type="evidence" value="ECO:0007669"/>
    <property type="project" value="TreeGrafter"/>
</dbReference>
<dbReference type="GO" id="GO:0006094">
    <property type="term" value="P:gluconeogenesis"/>
    <property type="evidence" value="ECO:0007669"/>
    <property type="project" value="UniProtKB-UniRule"/>
</dbReference>
<dbReference type="GO" id="GO:0051156">
    <property type="term" value="P:glucose 6-phosphate metabolic process"/>
    <property type="evidence" value="ECO:0007669"/>
    <property type="project" value="TreeGrafter"/>
</dbReference>
<dbReference type="GO" id="GO:0006096">
    <property type="term" value="P:glycolytic process"/>
    <property type="evidence" value="ECO:0007669"/>
    <property type="project" value="UniProtKB-UniRule"/>
</dbReference>
<dbReference type="CDD" id="cd05015">
    <property type="entry name" value="SIS_PGI_1"/>
    <property type="match status" value="1"/>
</dbReference>
<dbReference type="CDD" id="cd05016">
    <property type="entry name" value="SIS_PGI_2"/>
    <property type="match status" value="1"/>
</dbReference>
<dbReference type="FunFam" id="3.40.50.10490:FF:000018">
    <property type="entry name" value="Glucose-6-phosphate isomerase"/>
    <property type="match status" value="1"/>
</dbReference>
<dbReference type="Gene3D" id="1.10.1390.10">
    <property type="match status" value="1"/>
</dbReference>
<dbReference type="Gene3D" id="3.40.50.10490">
    <property type="entry name" value="Glucose-6-phosphate isomerase like protein, domain 1"/>
    <property type="match status" value="2"/>
</dbReference>
<dbReference type="HAMAP" id="MF_00473">
    <property type="entry name" value="G6P_isomerase"/>
    <property type="match status" value="1"/>
</dbReference>
<dbReference type="InterPro" id="IPR001672">
    <property type="entry name" value="G6P_Isomerase"/>
</dbReference>
<dbReference type="InterPro" id="IPR023096">
    <property type="entry name" value="G6P_Isomerase_C"/>
</dbReference>
<dbReference type="InterPro" id="IPR018189">
    <property type="entry name" value="Phosphoglucose_isomerase_CS"/>
</dbReference>
<dbReference type="InterPro" id="IPR046348">
    <property type="entry name" value="SIS_dom_sf"/>
</dbReference>
<dbReference type="InterPro" id="IPR035476">
    <property type="entry name" value="SIS_PGI_1"/>
</dbReference>
<dbReference type="InterPro" id="IPR035482">
    <property type="entry name" value="SIS_PGI_2"/>
</dbReference>
<dbReference type="NCBIfam" id="NF001211">
    <property type="entry name" value="PRK00179.1"/>
    <property type="match status" value="1"/>
</dbReference>
<dbReference type="PANTHER" id="PTHR11469">
    <property type="entry name" value="GLUCOSE-6-PHOSPHATE ISOMERASE"/>
    <property type="match status" value="1"/>
</dbReference>
<dbReference type="PANTHER" id="PTHR11469:SF1">
    <property type="entry name" value="GLUCOSE-6-PHOSPHATE ISOMERASE"/>
    <property type="match status" value="1"/>
</dbReference>
<dbReference type="Pfam" id="PF00342">
    <property type="entry name" value="PGI"/>
    <property type="match status" value="1"/>
</dbReference>
<dbReference type="PRINTS" id="PR00662">
    <property type="entry name" value="G6PISOMERASE"/>
</dbReference>
<dbReference type="SUPFAM" id="SSF53697">
    <property type="entry name" value="SIS domain"/>
    <property type="match status" value="1"/>
</dbReference>
<dbReference type="PROSITE" id="PS00765">
    <property type="entry name" value="P_GLUCOSE_ISOMERASE_1"/>
    <property type="match status" value="1"/>
</dbReference>
<dbReference type="PROSITE" id="PS00174">
    <property type="entry name" value="P_GLUCOSE_ISOMERASE_2"/>
    <property type="match status" value="1"/>
</dbReference>
<dbReference type="PROSITE" id="PS51463">
    <property type="entry name" value="P_GLUCOSE_ISOMERASE_3"/>
    <property type="match status" value="1"/>
</dbReference>
<comment type="function">
    <text evidence="1">Catalyzes the reversible isomerization of glucose-6-phosphate to fructose-6-phosphate.</text>
</comment>
<comment type="catalytic activity">
    <reaction evidence="1">
        <text>alpha-D-glucose 6-phosphate = beta-D-fructose 6-phosphate</text>
        <dbReference type="Rhea" id="RHEA:11816"/>
        <dbReference type="ChEBI" id="CHEBI:57634"/>
        <dbReference type="ChEBI" id="CHEBI:58225"/>
        <dbReference type="EC" id="5.3.1.9"/>
    </reaction>
</comment>
<comment type="pathway">
    <text evidence="1">Carbohydrate biosynthesis; gluconeogenesis.</text>
</comment>
<comment type="pathway">
    <text evidence="1">Carbohydrate degradation; glycolysis; D-glyceraldehyde 3-phosphate and glycerone phosphate from D-glucose: step 2/4.</text>
</comment>
<comment type="subcellular location">
    <subcellularLocation>
        <location evidence="1">Cytoplasm</location>
    </subcellularLocation>
</comment>
<comment type="similarity">
    <text evidence="1 2">Belongs to the GPI family.</text>
</comment>